<protein>
    <recommendedName>
        <fullName evidence="1">Probable phosphatase Sputw3181_2734</fullName>
        <ecNumber evidence="1">3.1.3.-</ecNumber>
    </recommendedName>
</protein>
<comment type="cofactor">
    <cofactor evidence="1">
        <name>Zn(2+)</name>
        <dbReference type="ChEBI" id="CHEBI:29105"/>
    </cofactor>
    <text evidence="1">Binds 3 Zn(2+) ions per subunit.</text>
</comment>
<comment type="similarity">
    <text evidence="1">Belongs to the PHP family.</text>
</comment>
<dbReference type="EC" id="3.1.3.-" evidence="1"/>
<dbReference type="EMBL" id="CP000503">
    <property type="protein sequence ID" value="ABM25551.1"/>
    <property type="molecule type" value="Genomic_DNA"/>
</dbReference>
<dbReference type="RefSeq" id="WP_011790007.1">
    <property type="nucleotide sequence ID" value="NC_008750.1"/>
</dbReference>
<dbReference type="SMR" id="A1RLK6"/>
<dbReference type="KEGG" id="shw:Sputw3181_2734"/>
<dbReference type="HOGENOM" id="CLU_061999_0_1_6"/>
<dbReference type="Proteomes" id="UP000002597">
    <property type="component" value="Chromosome"/>
</dbReference>
<dbReference type="GO" id="GO:0005829">
    <property type="term" value="C:cytosol"/>
    <property type="evidence" value="ECO:0007669"/>
    <property type="project" value="TreeGrafter"/>
</dbReference>
<dbReference type="GO" id="GO:0016791">
    <property type="term" value="F:phosphatase activity"/>
    <property type="evidence" value="ECO:0007669"/>
    <property type="project" value="UniProtKB-UniRule"/>
</dbReference>
<dbReference type="GO" id="GO:0008270">
    <property type="term" value="F:zinc ion binding"/>
    <property type="evidence" value="ECO:0007669"/>
    <property type="project" value="UniProtKB-UniRule"/>
</dbReference>
<dbReference type="GO" id="GO:0071978">
    <property type="term" value="P:bacterial-type flagellum-dependent swarming motility"/>
    <property type="evidence" value="ECO:0007669"/>
    <property type="project" value="TreeGrafter"/>
</dbReference>
<dbReference type="CDD" id="cd07437">
    <property type="entry name" value="PHP_HisPPase_Ycdx_like"/>
    <property type="match status" value="1"/>
</dbReference>
<dbReference type="FunFam" id="3.20.20.140:FF:000008">
    <property type="entry name" value="Probable phosphatase YcdX"/>
    <property type="match status" value="1"/>
</dbReference>
<dbReference type="Gene3D" id="3.20.20.140">
    <property type="entry name" value="Metal-dependent hydrolases"/>
    <property type="match status" value="1"/>
</dbReference>
<dbReference type="HAMAP" id="MF_01561">
    <property type="entry name" value="YcdX_phosphat"/>
    <property type="match status" value="1"/>
</dbReference>
<dbReference type="InterPro" id="IPR023710">
    <property type="entry name" value="Phosphatase_YcdX_put"/>
</dbReference>
<dbReference type="InterPro" id="IPR004013">
    <property type="entry name" value="PHP_dom"/>
</dbReference>
<dbReference type="InterPro" id="IPR050243">
    <property type="entry name" value="PHP_phosphatase"/>
</dbReference>
<dbReference type="InterPro" id="IPR003141">
    <property type="entry name" value="Pol/His_phosphatase_N"/>
</dbReference>
<dbReference type="InterPro" id="IPR016195">
    <property type="entry name" value="Pol/histidinol_Pase-like"/>
</dbReference>
<dbReference type="NCBIfam" id="NF006702">
    <property type="entry name" value="PRK09248.1"/>
    <property type="match status" value="1"/>
</dbReference>
<dbReference type="PANTHER" id="PTHR36928">
    <property type="entry name" value="PHOSPHATASE YCDX-RELATED"/>
    <property type="match status" value="1"/>
</dbReference>
<dbReference type="PANTHER" id="PTHR36928:SF1">
    <property type="entry name" value="PHOSPHATASE YCDX-RELATED"/>
    <property type="match status" value="1"/>
</dbReference>
<dbReference type="Pfam" id="PF02811">
    <property type="entry name" value="PHP"/>
    <property type="match status" value="1"/>
</dbReference>
<dbReference type="SMART" id="SM00481">
    <property type="entry name" value="POLIIIAc"/>
    <property type="match status" value="1"/>
</dbReference>
<dbReference type="SUPFAM" id="SSF89550">
    <property type="entry name" value="PHP domain-like"/>
    <property type="match status" value="1"/>
</dbReference>
<keyword id="KW-0378">Hydrolase</keyword>
<keyword id="KW-0479">Metal-binding</keyword>
<keyword id="KW-0862">Zinc</keyword>
<gene>
    <name type="ordered locus">Sputw3181_2734</name>
</gene>
<reference key="1">
    <citation type="submission" date="2006-12" db="EMBL/GenBank/DDBJ databases">
        <title>Complete sequence of Shewanella sp. W3-18-1.</title>
        <authorList>
            <consortium name="US DOE Joint Genome Institute"/>
            <person name="Copeland A."/>
            <person name="Lucas S."/>
            <person name="Lapidus A."/>
            <person name="Barry K."/>
            <person name="Detter J.C."/>
            <person name="Glavina del Rio T."/>
            <person name="Hammon N."/>
            <person name="Israni S."/>
            <person name="Dalin E."/>
            <person name="Tice H."/>
            <person name="Pitluck S."/>
            <person name="Chain P."/>
            <person name="Malfatti S."/>
            <person name="Shin M."/>
            <person name="Vergez L."/>
            <person name="Schmutz J."/>
            <person name="Larimer F."/>
            <person name="Land M."/>
            <person name="Hauser L."/>
            <person name="Kyrpides N."/>
            <person name="Lykidis A."/>
            <person name="Tiedje J."/>
            <person name="Richardson P."/>
        </authorList>
    </citation>
    <scope>NUCLEOTIDE SEQUENCE [LARGE SCALE GENOMIC DNA]</scope>
    <source>
        <strain>W3-18-1</strain>
    </source>
</reference>
<proteinExistence type="inferred from homology"/>
<accession>A1RLK6</accession>
<feature type="chain" id="PRO_1000069033" description="Probable phosphatase Sputw3181_2734">
    <location>
        <begin position="1"/>
        <end position="251"/>
    </location>
</feature>
<feature type="binding site" evidence="1">
    <location>
        <position position="8"/>
    </location>
    <ligand>
        <name>Zn(2+)</name>
        <dbReference type="ChEBI" id="CHEBI:29105"/>
        <label>1</label>
    </ligand>
</feature>
<feature type="binding site" evidence="1">
    <location>
        <position position="10"/>
    </location>
    <ligand>
        <name>Zn(2+)</name>
        <dbReference type="ChEBI" id="CHEBI:29105"/>
        <label>1</label>
    </ligand>
</feature>
<feature type="binding site" evidence="1">
    <location>
        <position position="16"/>
    </location>
    <ligand>
        <name>Zn(2+)</name>
        <dbReference type="ChEBI" id="CHEBI:29105"/>
        <label>2</label>
    </ligand>
</feature>
<feature type="binding site" evidence="1">
    <location>
        <position position="41"/>
    </location>
    <ligand>
        <name>Zn(2+)</name>
        <dbReference type="ChEBI" id="CHEBI:29105"/>
        <label>2</label>
    </ligand>
</feature>
<feature type="binding site" evidence="1">
    <location>
        <position position="74"/>
    </location>
    <ligand>
        <name>Zn(2+)</name>
        <dbReference type="ChEBI" id="CHEBI:29105"/>
        <label>1</label>
    </ligand>
</feature>
<feature type="binding site" evidence="1">
    <location>
        <position position="74"/>
    </location>
    <ligand>
        <name>Zn(2+)</name>
        <dbReference type="ChEBI" id="CHEBI:29105"/>
        <label>3</label>
    </ligand>
</feature>
<feature type="binding site" evidence="1">
    <location>
        <position position="102"/>
    </location>
    <ligand>
        <name>Zn(2+)</name>
        <dbReference type="ChEBI" id="CHEBI:29105"/>
        <label>3</label>
    </ligand>
</feature>
<feature type="binding site" evidence="1">
    <location>
        <position position="132"/>
    </location>
    <ligand>
        <name>Zn(2+)</name>
        <dbReference type="ChEBI" id="CHEBI:29105"/>
        <label>3</label>
    </ligand>
</feature>
<feature type="binding site" evidence="1">
    <location>
        <position position="193"/>
    </location>
    <ligand>
        <name>Zn(2+)</name>
        <dbReference type="ChEBI" id="CHEBI:29105"/>
        <label>1</label>
    </ligand>
</feature>
<feature type="binding site" evidence="1">
    <location>
        <position position="195"/>
    </location>
    <ligand>
        <name>Zn(2+)</name>
        <dbReference type="ChEBI" id="CHEBI:29105"/>
        <label>2</label>
    </ligand>
</feature>
<evidence type="ECO:0000255" key="1">
    <source>
        <dbReference type="HAMAP-Rule" id="MF_01561"/>
    </source>
</evidence>
<organism>
    <name type="scientific">Shewanella sp. (strain W3-18-1)</name>
    <dbReference type="NCBI Taxonomy" id="351745"/>
    <lineage>
        <taxon>Bacteria</taxon>
        <taxon>Pseudomonadati</taxon>
        <taxon>Pseudomonadota</taxon>
        <taxon>Gammaproteobacteria</taxon>
        <taxon>Alteromonadales</taxon>
        <taxon>Shewanellaceae</taxon>
        <taxon>Shewanella</taxon>
    </lineage>
</organism>
<name>Y2734_SHESW</name>
<sequence length="251" mass="27151">MQYQVDTHTHTVASTHAYSTIHDYLAVAKQKGIRLFATTDHGPAMADAPHFWHFVNLRVLPRMVDGVGILRGIEANIKNIDGEIDFFGDYLKQLDIVLAGFHEPVYPPSDKATHTEAMINTIKSGKVDIITHPGNPAYPIDIDAVARAAAEYGVALEINNSSFEVSRKGSEANCTAIAKAAKEFGTILVMGSDSHVAFSLGGFERALAIIDAAGYPKSQLLNRSPSVLLGFLAQRGHHTVADLQALFDEAV</sequence>